<name>PYRP_BACCL</name>
<dbReference type="EMBL" id="X76083">
    <property type="protein sequence ID" value="CAA53697.1"/>
    <property type="molecule type" value="Genomic_DNA"/>
</dbReference>
<dbReference type="PIR" id="S38893">
    <property type="entry name" value="S38893"/>
</dbReference>
<dbReference type="RefSeq" id="WP_011230648.1">
    <property type="nucleotide sequence ID" value="NZ_CP025074.1"/>
</dbReference>
<dbReference type="SMR" id="P41006"/>
<dbReference type="KEGG" id="bcal:CWI35_04515"/>
<dbReference type="GO" id="GO:0005886">
    <property type="term" value="C:plasma membrane"/>
    <property type="evidence" value="ECO:0007669"/>
    <property type="project" value="UniProtKB-SubCell"/>
</dbReference>
<dbReference type="GO" id="GO:0042907">
    <property type="term" value="F:xanthine transmembrane transporter activity"/>
    <property type="evidence" value="ECO:0007669"/>
    <property type="project" value="TreeGrafter"/>
</dbReference>
<dbReference type="InterPro" id="IPR006043">
    <property type="entry name" value="NCS2"/>
</dbReference>
<dbReference type="InterPro" id="IPR006042">
    <property type="entry name" value="Xan_ur_permease"/>
</dbReference>
<dbReference type="NCBIfam" id="TIGR00801">
    <property type="entry name" value="ncs2"/>
    <property type="match status" value="1"/>
</dbReference>
<dbReference type="PANTHER" id="PTHR42810">
    <property type="entry name" value="PURINE PERMEASE C1399.01C-RELATED"/>
    <property type="match status" value="1"/>
</dbReference>
<dbReference type="PANTHER" id="PTHR42810:SF2">
    <property type="entry name" value="PURINE PERMEASE C1399.01C-RELATED"/>
    <property type="match status" value="1"/>
</dbReference>
<dbReference type="Pfam" id="PF00860">
    <property type="entry name" value="Xan_ur_permease"/>
    <property type="match status" value="1"/>
</dbReference>
<dbReference type="PROSITE" id="PS01116">
    <property type="entry name" value="XANTH_URACIL_PERMASE"/>
    <property type="match status" value="1"/>
</dbReference>
<evidence type="ECO:0000255" key="1"/>
<evidence type="ECO:0000305" key="2"/>
<protein>
    <recommendedName>
        <fullName>Uracil permease</fullName>
    </recommendedName>
    <alternativeName>
        <fullName>Uracil transporter</fullName>
    </alternativeName>
</protein>
<feature type="chain" id="PRO_0000165956" description="Uracil permease">
    <location>
        <begin position="1"/>
        <end position="432"/>
    </location>
</feature>
<feature type="transmembrane region" description="Helical" evidence="1">
    <location>
        <begin position="25"/>
        <end position="45"/>
    </location>
</feature>
<feature type="transmembrane region" description="Helical" evidence="1">
    <location>
        <begin position="65"/>
        <end position="85"/>
    </location>
</feature>
<feature type="transmembrane region" description="Helical" evidence="1">
    <location>
        <begin position="89"/>
        <end position="109"/>
    </location>
</feature>
<feature type="transmembrane region" description="Helical" evidence="1">
    <location>
        <begin position="124"/>
        <end position="144"/>
    </location>
</feature>
<feature type="transmembrane region" description="Helical" evidence="1">
    <location>
        <begin position="155"/>
        <end position="175"/>
    </location>
</feature>
<feature type="transmembrane region" description="Helical" evidence="1">
    <location>
        <begin position="181"/>
        <end position="201"/>
    </location>
</feature>
<feature type="transmembrane region" description="Helical" evidence="1">
    <location>
        <begin position="206"/>
        <end position="226"/>
    </location>
</feature>
<feature type="transmembrane region" description="Helical" evidence="1">
    <location>
        <begin position="228"/>
        <end position="248"/>
    </location>
</feature>
<feature type="transmembrane region" description="Helical" evidence="1">
    <location>
        <begin position="305"/>
        <end position="325"/>
    </location>
</feature>
<feature type="transmembrane region" description="Helical" evidence="1">
    <location>
        <begin position="330"/>
        <end position="350"/>
    </location>
</feature>
<feature type="transmembrane region" description="Helical" evidence="1">
    <location>
        <begin position="370"/>
        <end position="390"/>
    </location>
</feature>
<feature type="transmembrane region" description="Helical" evidence="1">
    <location>
        <begin position="393"/>
        <end position="413"/>
    </location>
</feature>
<sequence>MNKPVLDIQDRPTVGQWITLSLQHLFAMFGATILVPYLVGLDPSIALLTSGLGTLAFLLITKWQVPAYLGSSFAYIAPIIAAKTAGGPGAAMIGSFLAGLVYGVVALIIKKAGYRWVMKLLPPVVVGPVIIVIGLGLAGTAVGMAMNGPDGKYSLLHFSVALVTLAATIVCSVLARGMLSLIPVLVGIVVGYLYALAVGLVDLSKVAAAKWFEWPDFLIPFADYPVRVTWEIVMLMVPVAIVTLSEHIGHQLVLSKVVGRDLIQKPGLHRSILGDGTATMISALLGGPPKTTYGENIGVLAITRVYSVYVLAGAAVIAIAFGFVGKITALISSIPTPVMGGVSILLFGIIASSGLRMLIDSRVDFGQTRNLVIASVILVIGIGGAVLKISDSFQITGMALSAIVGVLLNLILPGRPQAAENLFEENQSDHVA</sequence>
<reference key="1">
    <citation type="journal article" date="1994" name="J. Bacteriol.">
        <title>The pyrimidine biosynthesis operon of the thermophile Bacillus caldolyticus includes genes for uracil phosphoribosyltransferase and uracil permease.</title>
        <authorList>
            <person name="Ghim S.Y."/>
            <person name="Neuhard J."/>
        </authorList>
    </citation>
    <scope>NUCLEOTIDE SEQUENCE [GENOMIC DNA]</scope>
    <source>
        <strain>DSM 405 / NBRC 15313 / YP-T</strain>
    </source>
</reference>
<gene>
    <name type="primary">pyrP</name>
</gene>
<accession>P41006</accession>
<keyword id="KW-1003">Cell membrane</keyword>
<keyword id="KW-0472">Membrane</keyword>
<keyword id="KW-0812">Transmembrane</keyword>
<keyword id="KW-1133">Transmembrane helix</keyword>
<keyword id="KW-0813">Transport</keyword>
<proteinExistence type="inferred from homology"/>
<organism>
    <name type="scientific">Bacillus caldolyticus</name>
    <dbReference type="NCBI Taxonomy" id="1394"/>
    <lineage>
        <taxon>Bacteria</taxon>
        <taxon>Bacillati</taxon>
        <taxon>Bacillota</taxon>
        <taxon>Bacilli</taxon>
        <taxon>Bacillales</taxon>
        <taxon>Anoxybacillaceae</taxon>
        <taxon>Geobacillus</taxon>
        <taxon>Geobacillus thermoleovorans group</taxon>
    </lineage>
</organism>
<comment type="function">
    <text>Transport of uracil in the cell.</text>
</comment>
<comment type="subcellular location">
    <subcellularLocation>
        <location evidence="2">Cell membrane</location>
        <topology evidence="2">Multi-pass membrane protein</topology>
    </subcellularLocation>
</comment>
<comment type="similarity">
    <text evidence="2">Belongs to the nucleobase:cation symporter-2 (NCS2) (TC 2.A.40) family.</text>
</comment>